<name>SYGP1_HUMAN</name>
<proteinExistence type="evidence at protein level"/>
<sequence>MSRSRASIHRGSIPAMSYAPFRDVRGPSMHRTQYVHSPYDRPGWNPRFCIISGNQLLMLDEDEIHPLLIRDRRSESSRNKLLRRTVSVPVEGRPHGEHEYHLGRSRRKSVPGGKQYSMEGAPAAPFRPSQGFLSRRLKSSIKRTKSQPKLDRTSSFRQILPRFRSADHDRARLMQSFKESHSHESLLSPSSAAEALELNLDEDSIIKPVHSSILGQEFCFEVTTSSGTKCFACRSAAERDKWIENLQRAVKPNKDNSRRVDNVLKLWIIEARELPPKKRYYCELCLDDMLYARTTSKPRSASGDTVFWGEHFEFNNLPAVRALRLHLYRDSDKKRKKDKAGYVGLVTVPVATLAGRHFTEQWYPVTLPTGSGGSGGMGSGGGGGSGGGSGGKGKGGCPAVRLKARYQTMSILPMELYKEFAEYVTNHYRMLCAVLEPALNVKGKEEVASALVHILQSTGKAKDFLSDMAMSEVDRFMEREHLIFRENTLATKAIEEYMRLIGQKYLKDAIGEFIRALYESEENCEVDPIKCTASSLAEHQANLRMCCELALCKVVNSHCVFPRELKEVFASWRLRCAERGREDIADRLISASLFLRFLCPAIMSPSLFGLMQEYPDEQTSRTLTLIAKVIQNLANFSKFTSKEDFLGFMNEFLELEWGSMQQFLYEISNLDTLTNSSSFEGYIDLGRELSTLHALLWEVLPQLSKEALLKLGPLPRLLNDISTALRNPNIQRQPSRQSERPRPQPVVLRGPSAEMQGYMMRDLNSSIDLQSFMARGLNSSMDMARLPSPTKEKPPPPPPGGGKDLFYVSRPPLARSSPAYCTSSSDITEPEQKMLSVNKSVSMLDLQGDGPGGRLNSSSVSNLAAVGDLLHSSQASLTAALGLRPAPAGRLSQGSGSSITAAGMRLSQMGVTTDGVPAQQLRIPLSFQNPLFHMAADGPGPPGGHGGGGGHGPPSSHHHHHHHHHHRGGEPPGDTFAPFHGYSKSEDLSSGVPKPPAASILHSHSYSDEFGPSGTDFTRRQLSLQDNLQHMLSPPQITIGPQRPAPSGPGGGSGGGSGGGGGGQPPPLQRGKSQQLTVSAAQKPRPSSGNLLQSPEPSYGPARPRQQSLSKEGSIGGSGGSGGGGGGGLKPSITKQHSQTPSTLNPTMPASERTVAWVSNMPHLSADIESAHIEREEYKLKEYSKSMDESRLDRVKEYEEEIHSLKERLHMSNRKLEEYERRLLSQEEQTSKILMQYQARLEQSEKRLRQQQAEKDSQIKSIIGRLMLVEEELRRDHPAMAEPLPEPKKRLLDAQERQLPPLGPTNPRVTLAPPWNGLAPPAPPPPPRLQITENGEFRNTADH</sequence>
<protein>
    <recommendedName>
        <fullName>Ras/Rap GTPase-activating protein SynGAP</fullName>
    </recommendedName>
    <alternativeName>
        <fullName>Neuronal RasGAP</fullName>
    </alternativeName>
    <alternativeName>
        <fullName>Synaptic Ras GTPase-activating protein 1</fullName>
        <shortName>Synaptic Ras-GAP 1</shortName>
    </alternativeName>
</protein>
<comment type="function">
    <text evidence="1">Major constituent of the PSD essential for postsynaptic signaling. Inhibitory regulator of the Ras-cAMP pathway. Member of the NMDAR signaling complex in excitatory synapses, it may play a role in NMDAR-dependent control of AMPAR potentiation, AMPAR membrane trafficking and synaptic plasticity. Regulates AMPAR-mediated miniature excitatory postsynaptic currents. Exhibits dual GTPase-activating specificity for Ras and Rap. May be involved in certain forms of brain injury, leading to long-term learning and memory deficits (By similarity).</text>
</comment>
<comment type="subunit">
    <text evidence="2 3 9">Interacts with KLHL17, CAMK2A and CAMK2B (By similarity). Interacts with MPDZ (PubMed:15312654). Interacts with FAM81A; the interaction facilitates condensate formation via liquid-liquid phase separation (By similarity).</text>
</comment>
<comment type="interaction">
    <interactant intactId="EBI-2682386">
        <id>Q96PV0</id>
    </interactant>
    <interactant intactId="EBI-701927">
        <id>O60716</id>
        <label>CTNND1</label>
    </interactant>
    <organismsDiffer>false</organismsDiffer>
    <experiments>4</experiments>
</comment>
<comment type="interaction">
    <interactant intactId="EBI-2682386">
        <id>Q96PV0</id>
    </interactant>
    <interactant intactId="EBI-743105">
        <id>Q5JVL4</id>
        <label>EFHC1</label>
    </interactant>
    <organismsDiffer>false</organismsDiffer>
    <experiments>3</experiments>
</comment>
<comment type="interaction">
    <interactant intactId="EBI-2682386">
        <id>Q96PV0</id>
    </interactant>
    <interactant intactId="EBI-749673">
        <id>Q14576</id>
        <label>ELAVL3</label>
    </interactant>
    <organismsDiffer>false</organismsDiffer>
    <experiments>7</experiments>
</comment>
<comment type="interaction">
    <interactant intactId="EBI-2682386">
        <id>Q96PV0</id>
    </interactant>
    <interactant intactId="EBI-11081732">
        <id>O95208</id>
        <label>EPN2</label>
    </interactant>
    <organismsDiffer>false</organismsDiffer>
    <experiments>2</experiments>
</comment>
<comment type="interaction">
    <interactant intactId="EBI-2682386">
        <id>Q96PV0</id>
    </interactant>
    <interactant intactId="EBI-366305">
        <id>Q06787</id>
        <label>FMR1</label>
    </interactant>
    <organismsDiffer>false</organismsDiffer>
    <experiments>3</experiments>
</comment>
<comment type="interaction">
    <interactant intactId="EBI-2682386">
        <id>Q96PV0</id>
    </interactant>
    <interactant intactId="EBI-713291">
        <id>P51114</id>
        <label>FXR1</label>
    </interactant>
    <organismsDiffer>false</organismsDiffer>
    <experiments>4</experiments>
</comment>
<comment type="interaction">
    <interactant intactId="EBI-2682386">
        <id>Q96PV0</id>
    </interactant>
    <interactant intactId="EBI-715087">
        <id>P09471</id>
        <label>GNAO1</label>
    </interactant>
    <organismsDiffer>false</organismsDiffer>
    <experiments>4</experiments>
</comment>
<comment type="interaction">
    <interactant intactId="EBI-2682386">
        <id>Q96PV0</id>
    </interactant>
    <interactant intactId="EBI-11978177">
        <id>Q96NT3-2</id>
        <label>GUCD1</label>
    </interactant>
    <organismsDiffer>false</organismsDiffer>
    <experiments>3</experiments>
</comment>
<comment type="interaction">
    <interactant intactId="EBI-2682386">
        <id>Q96PV0</id>
    </interactant>
    <interactant intactId="EBI-358163">
        <id>P10412</id>
        <label>H1-4</label>
    </interactant>
    <organismsDiffer>false</organismsDiffer>
    <experiments>2</experiments>
</comment>
<comment type="interaction">
    <interactant intactId="EBI-2682386">
        <id>Q96PV0</id>
    </interactant>
    <interactant intactId="EBI-11173743">
        <id>O60741</id>
        <label>HCN1</label>
    </interactant>
    <organismsDiffer>false</organismsDiffer>
    <experiments>3</experiments>
</comment>
<comment type="interaction">
    <interactant intactId="EBI-2682386">
        <id>Q96PV0</id>
    </interactant>
    <interactant intactId="EBI-299649">
        <id>P22626</id>
        <label>HNRNPA2B1</label>
    </interactant>
    <organismsDiffer>false</organismsDiffer>
    <experiments>4</experiments>
</comment>
<comment type="interaction">
    <interactant intactId="EBI-2682386">
        <id>Q96PV0</id>
    </interactant>
    <interactant intactId="EBI-7116203">
        <id>O75031</id>
        <label>HSF2BP</label>
    </interactant>
    <organismsDiffer>false</organismsDiffer>
    <experiments>3</experiments>
</comment>
<comment type="interaction">
    <interactant intactId="EBI-2682386">
        <id>Q96PV0</id>
    </interactant>
    <interactant intactId="EBI-3906896">
        <id>P61371</id>
        <label>ISL1</label>
    </interactant>
    <organismsDiffer>false</organismsDiffer>
    <experiments>8</experiments>
</comment>
<comment type="interaction">
    <interactant intactId="EBI-2682386">
        <id>Q96PV0</id>
    </interactant>
    <interactant intactId="EBI-677177">
        <id>Q86U70</id>
        <label>LDB1</label>
    </interactant>
    <organismsDiffer>false</organismsDiffer>
    <experiments>9</experiments>
</comment>
<comment type="interaction">
    <interactant intactId="EBI-2682386">
        <id>Q96PV0</id>
    </interactant>
    <interactant intactId="EBI-10172526">
        <id>Q9UJV3-2</id>
        <label>MID2</label>
    </interactant>
    <organismsDiffer>false</organismsDiffer>
    <experiments>3</experiments>
</comment>
<comment type="interaction">
    <interactant intactId="EBI-2682386">
        <id>Q96PV0</id>
    </interactant>
    <interactant intactId="EBI-2340269">
        <id>Q13064</id>
        <label>MKRN3</label>
    </interactant>
    <organismsDiffer>false</organismsDiffer>
    <experiments>3</experiments>
</comment>
<comment type="interaction">
    <interactant intactId="EBI-2682386">
        <id>Q96PV0</id>
    </interactant>
    <interactant intactId="EBI-713635">
        <id>O43639</id>
        <label>NCK2</label>
    </interactant>
    <organismsDiffer>false</organismsDiffer>
    <experiments>3</experiments>
</comment>
<comment type="interaction">
    <interactant intactId="EBI-2682386">
        <id>Q96PV0</id>
    </interactant>
    <interactant intactId="EBI-4314838">
        <id>Q7Z3B1</id>
        <label>NEGR1</label>
    </interactant>
    <organismsDiffer>false</organismsDiffer>
    <experiments>4</experiments>
</comment>
<comment type="interaction">
    <interactant intactId="EBI-2682386">
        <id>Q96PV0</id>
    </interactant>
    <interactant intactId="EBI-741158">
        <id>Q96HA8</id>
        <label>NTAQ1</label>
    </interactant>
    <organismsDiffer>false</organismsDiffer>
    <experiments>3</experiments>
</comment>
<comment type="interaction">
    <interactant intactId="EBI-2682386">
        <id>Q96PV0</id>
    </interactant>
    <interactant intactId="EBI-357418">
        <id>Q8TAQ2</id>
        <label>SMARCC2</label>
    </interactant>
    <organismsDiffer>false</organismsDiffer>
    <experiments>3</experiments>
</comment>
<comment type="interaction">
    <interactant intactId="EBI-2682386">
        <id>Q96PV0</id>
    </interactant>
    <interactant intactId="EBI-11959123">
        <id>Q99932-2</id>
        <label>SPAG8</label>
    </interactant>
    <organismsDiffer>false</organismsDiffer>
    <experiments>3</experiments>
</comment>
<comment type="interaction">
    <interactant intactId="EBI-2682386">
        <id>Q96PV0</id>
    </interactant>
    <interactant intactId="EBI-3921347">
        <id>P51687</id>
        <label>SUOX</label>
    </interactant>
    <organismsDiffer>false</organismsDiffer>
    <experiments>3</experiments>
</comment>
<comment type="interaction">
    <interactant intactId="EBI-2682386">
        <id>Q96PV0</id>
    </interactant>
    <interactant intactId="EBI-3939165">
        <id>O43711</id>
        <label>TLX3</label>
    </interactant>
    <organismsDiffer>false</organismsDiffer>
    <experiments>3</experiments>
</comment>
<comment type="interaction">
    <interactant intactId="EBI-2682386">
        <id>Q96PV0</id>
    </interactant>
    <interactant intactId="EBI-719493">
        <id>P14373</id>
        <label>TRIM27</label>
    </interactant>
    <organismsDiffer>false</organismsDiffer>
    <experiments>3</experiments>
</comment>
<comment type="interaction">
    <interactant intactId="EBI-2682386">
        <id>Q96PV0</id>
    </interactant>
    <interactant intactId="EBI-3918381">
        <id>Q96PN8</id>
        <label>TSSK3</label>
    </interactant>
    <organismsDiffer>false</organismsDiffer>
    <experiments>3</experiments>
</comment>
<comment type="interaction">
    <interactant intactId="EBI-2682386">
        <id>Q96PV0</id>
    </interactant>
    <interactant intactId="EBI-10191303">
        <id>O95231</id>
        <label>VENTX</label>
    </interactant>
    <organismsDiffer>false</organismsDiffer>
    <experiments>3</experiments>
</comment>
<comment type="alternative products">
    <event type="alternative splicing"/>
    <isoform>
        <id>Q96PV0-1</id>
        <name>1</name>
        <sequence type="displayed"/>
    </isoform>
    <isoform>
        <id>Q96PV0-2</id>
        <name>2</name>
        <sequence type="described" ref="VSP_007973"/>
    </isoform>
    <isoform>
        <id>Q96PV0-3</id>
        <name>3</name>
        <sequence type="described" ref="VSP_026376"/>
    </isoform>
    <isoform>
        <id>Q96PV0-4</id>
        <name>4</name>
        <sequence type="described" ref="VSP_026377"/>
    </isoform>
    <text>Additional isoforms seem to exist.</text>
</comment>
<comment type="domain">
    <text evidence="1">The C2 domain is required for RapGAP activity.</text>
</comment>
<comment type="PTM">
    <text evidence="1">Phosphorylated by CaM-kinase II. Dephosphorylated upon NMDA receptor activation or SYNGAP1/MPDZ complex disruption. Phosphorylation by PLK2 promotes its activity (By similarity).</text>
</comment>
<comment type="disease" evidence="10 11 12 13 14">
    <disease id="DI-00713">
        <name>Intellectual developmental disorder, autosomal dominant 5</name>
        <acronym>MRD5</acronym>
        <description>A disorder characterized by significantly below average general intellectual functioning associated with impairments in adaptive behavior and manifested during the developmental period. MRD5 patients show global developmental delay with delayed motor development, hypotonia, moderate-to-severe intellectual disability, and severe language impairment. Epilepsy and autism can be present in some patients.</description>
        <dbReference type="MIM" id="612621"/>
    </disease>
    <text>The disease is caused by variants affecting the gene represented in this entry.</text>
</comment>
<comment type="caution">
    <text evidence="17">It is uncertain whether Met-1 or Met-16 is the initiator methionine.</text>
</comment>
<comment type="sequence caution" evidence="17">
    <conflict type="erroneous initiation">
        <sequence resource="EMBL-CDS" id="BAB67831"/>
    </conflict>
    <text>Extended N-terminus.</text>
</comment>
<comment type="online information" name="Synaptic Ras GTPase activating protein 1 homolog (rat) (SYNGAP1)">
    <link uri="https://databases.lovd.nl/shared/genes/SYNGAP1"/>
    <text>Leiden Open Variation Database (LOVD)</text>
</comment>
<gene>
    <name type="primary">SYNGAP1</name>
    <name type="synonym">KIAA1938</name>
</gene>
<reference key="1">
    <citation type="journal article" date="2001" name="DNA Res.">
        <title>Prediction of the coding sequences of unidentified human genes. XXI. The complete sequences of 60 new cDNA clones from brain which code for large proteins.</title>
        <authorList>
            <person name="Nagase T."/>
            <person name="Kikuno R."/>
            <person name="Ohara O."/>
        </authorList>
    </citation>
    <scope>NUCLEOTIDE SEQUENCE [LARGE SCALE MRNA] (ISOFORM 1)</scope>
    <source>
        <tissue>Brain</tissue>
    </source>
</reference>
<reference key="2">
    <citation type="journal article" date="2003" name="Nature">
        <title>The DNA sequence and analysis of human chromosome 6.</title>
        <authorList>
            <person name="Mungall A.J."/>
            <person name="Palmer S.A."/>
            <person name="Sims S.K."/>
            <person name="Edwards C.A."/>
            <person name="Ashurst J.L."/>
            <person name="Wilming L."/>
            <person name="Jones M.C."/>
            <person name="Horton R."/>
            <person name="Hunt S.E."/>
            <person name="Scott C.E."/>
            <person name="Gilbert J.G.R."/>
            <person name="Clamp M.E."/>
            <person name="Bethel G."/>
            <person name="Milne S."/>
            <person name="Ainscough R."/>
            <person name="Almeida J.P."/>
            <person name="Ambrose K.D."/>
            <person name="Andrews T.D."/>
            <person name="Ashwell R.I.S."/>
            <person name="Babbage A.K."/>
            <person name="Bagguley C.L."/>
            <person name="Bailey J."/>
            <person name="Banerjee R."/>
            <person name="Barker D.J."/>
            <person name="Barlow K.F."/>
            <person name="Bates K."/>
            <person name="Beare D.M."/>
            <person name="Beasley H."/>
            <person name="Beasley O."/>
            <person name="Bird C.P."/>
            <person name="Blakey S.E."/>
            <person name="Bray-Allen S."/>
            <person name="Brook J."/>
            <person name="Brown A.J."/>
            <person name="Brown J.Y."/>
            <person name="Burford D.C."/>
            <person name="Burrill W."/>
            <person name="Burton J."/>
            <person name="Carder C."/>
            <person name="Carter N.P."/>
            <person name="Chapman J.C."/>
            <person name="Clark S.Y."/>
            <person name="Clark G."/>
            <person name="Clee C.M."/>
            <person name="Clegg S."/>
            <person name="Cobley V."/>
            <person name="Collier R.E."/>
            <person name="Collins J.E."/>
            <person name="Colman L.K."/>
            <person name="Corby N.R."/>
            <person name="Coville G.J."/>
            <person name="Culley K.M."/>
            <person name="Dhami P."/>
            <person name="Davies J."/>
            <person name="Dunn M."/>
            <person name="Earthrowl M.E."/>
            <person name="Ellington A.E."/>
            <person name="Evans K.A."/>
            <person name="Faulkner L."/>
            <person name="Francis M.D."/>
            <person name="Frankish A."/>
            <person name="Frankland J."/>
            <person name="French L."/>
            <person name="Garner P."/>
            <person name="Garnett J."/>
            <person name="Ghori M.J."/>
            <person name="Gilby L.M."/>
            <person name="Gillson C.J."/>
            <person name="Glithero R.J."/>
            <person name="Grafham D.V."/>
            <person name="Grant M."/>
            <person name="Gribble S."/>
            <person name="Griffiths C."/>
            <person name="Griffiths M.N.D."/>
            <person name="Hall R."/>
            <person name="Halls K.S."/>
            <person name="Hammond S."/>
            <person name="Harley J.L."/>
            <person name="Hart E.A."/>
            <person name="Heath P.D."/>
            <person name="Heathcott R."/>
            <person name="Holmes S.J."/>
            <person name="Howden P.J."/>
            <person name="Howe K.L."/>
            <person name="Howell G.R."/>
            <person name="Huckle E."/>
            <person name="Humphray S.J."/>
            <person name="Humphries M.D."/>
            <person name="Hunt A.R."/>
            <person name="Johnson C.M."/>
            <person name="Joy A.A."/>
            <person name="Kay M."/>
            <person name="Keenan S.J."/>
            <person name="Kimberley A.M."/>
            <person name="King A."/>
            <person name="Laird G.K."/>
            <person name="Langford C."/>
            <person name="Lawlor S."/>
            <person name="Leongamornlert D.A."/>
            <person name="Leversha M."/>
            <person name="Lloyd C.R."/>
            <person name="Lloyd D.M."/>
            <person name="Loveland J.E."/>
            <person name="Lovell J."/>
            <person name="Martin S."/>
            <person name="Mashreghi-Mohammadi M."/>
            <person name="Maslen G.L."/>
            <person name="Matthews L."/>
            <person name="McCann O.T."/>
            <person name="McLaren S.J."/>
            <person name="McLay K."/>
            <person name="McMurray A."/>
            <person name="Moore M.J.F."/>
            <person name="Mullikin J.C."/>
            <person name="Niblett D."/>
            <person name="Nickerson T."/>
            <person name="Novik K.L."/>
            <person name="Oliver K."/>
            <person name="Overton-Larty E.K."/>
            <person name="Parker A."/>
            <person name="Patel R."/>
            <person name="Pearce A.V."/>
            <person name="Peck A.I."/>
            <person name="Phillimore B.J.C.T."/>
            <person name="Phillips S."/>
            <person name="Plumb R.W."/>
            <person name="Porter K.M."/>
            <person name="Ramsey Y."/>
            <person name="Ranby S.A."/>
            <person name="Rice C.M."/>
            <person name="Ross M.T."/>
            <person name="Searle S.M."/>
            <person name="Sehra H.K."/>
            <person name="Sheridan E."/>
            <person name="Skuce C.D."/>
            <person name="Smith S."/>
            <person name="Smith M."/>
            <person name="Spraggon L."/>
            <person name="Squares S.L."/>
            <person name="Steward C.A."/>
            <person name="Sycamore N."/>
            <person name="Tamlyn-Hall G."/>
            <person name="Tester J."/>
            <person name="Theaker A.J."/>
            <person name="Thomas D.W."/>
            <person name="Thorpe A."/>
            <person name="Tracey A."/>
            <person name="Tromans A."/>
            <person name="Tubby B."/>
            <person name="Wall M."/>
            <person name="Wallis J.M."/>
            <person name="West A.P."/>
            <person name="White S.S."/>
            <person name="Whitehead S.L."/>
            <person name="Whittaker H."/>
            <person name="Wild A."/>
            <person name="Willey D.J."/>
            <person name="Wilmer T.E."/>
            <person name="Wood J.M."/>
            <person name="Wray P.W."/>
            <person name="Wyatt J.C."/>
            <person name="Young L."/>
            <person name="Younger R.M."/>
            <person name="Bentley D.R."/>
            <person name="Coulson A."/>
            <person name="Durbin R.M."/>
            <person name="Hubbard T."/>
            <person name="Sulston J.E."/>
            <person name="Dunham I."/>
            <person name="Rogers J."/>
            <person name="Beck S."/>
        </authorList>
    </citation>
    <scope>NUCLEOTIDE SEQUENCE [LARGE SCALE GENOMIC DNA]</scope>
</reference>
<reference key="3">
    <citation type="journal article" date="2007" name="BMC Genomics">
        <title>The full-ORF clone resource of the German cDNA consortium.</title>
        <authorList>
            <person name="Bechtel S."/>
            <person name="Rosenfelder H."/>
            <person name="Duda A."/>
            <person name="Schmidt C.P."/>
            <person name="Ernst U."/>
            <person name="Wellenreuther R."/>
            <person name="Mehrle A."/>
            <person name="Schuster C."/>
            <person name="Bahr A."/>
            <person name="Bloecker H."/>
            <person name="Heubner D."/>
            <person name="Hoerlein A."/>
            <person name="Michel G."/>
            <person name="Wedler H."/>
            <person name="Koehrer K."/>
            <person name="Ottenwaelder B."/>
            <person name="Poustka A."/>
            <person name="Wiemann S."/>
            <person name="Schupp I."/>
        </authorList>
    </citation>
    <scope>NUCLEOTIDE SEQUENCE [LARGE SCALE MRNA] OF 384-1343 (ISOFORM 2)</scope>
    <source>
        <tissue>Amygdala</tissue>
    </source>
</reference>
<reference key="4">
    <citation type="journal article" date="2004" name="Neuron">
        <title>SynGAP-MUPP1-CaMKII synaptic complexes regulate p38 MAP kinase activity and NMDA receptor-dependent synaptic AMPA receptor potentiation.</title>
        <authorList>
            <person name="Krapivinsky G."/>
            <person name="Medina I."/>
            <person name="Krapivinsky L."/>
            <person name="Gapon S."/>
            <person name="Clapham D.E."/>
        </authorList>
    </citation>
    <scope>INTERACTION WITH MPDZ</scope>
</reference>
<reference key="5">
    <citation type="journal article" date="2009" name="N. Engl. J. Med.">
        <title>Mutations in SYNGAP1 in autosomal nonsyndromic mental retardation.</title>
        <authorList>
            <consortium name="Synapse to disease group"/>
            <person name="Hamdan F.F."/>
            <person name="Gauthier J."/>
            <person name="Spiegelman D."/>
            <person name="Noreau A."/>
            <person name="Yang Y."/>
            <person name="Pellerin S."/>
            <person name="Dobrzeniecka S."/>
            <person name="Cote M."/>
            <person name="Perreault-Linck E."/>
            <person name="Carmant L."/>
            <person name="D'Anjou G."/>
            <person name="Fombonne E."/>
            <person name="Addington A.M."/>
            <person name="Rapoport J.L."/>
            <person name="Delisi L.E."/>
            <person name="Krebs M.O."/>
            <person name="Mouaffak F."/>
            <person name="Joober R."/>
            <person name="Mottron L."/>
            <person name="Drapeau P."/>
            <person name="Marineau C."/>
            <person name="Lafreniere R.G."/>
            <person name="Lacaille J.C."/>
            <person name="Rouleau G.A."/>
            <person name="Michaud J.L."/>
        </authorList>
    </citation>
    <scope>INVOLVEMENT IN MRD5</scope>
    <scope>VARIANTS GLU-201; GLN-749; ASN-790; THR-1115; LEU-1283 AND MET-1310</scope>
</reference>
<reference key="6">
    <citation type="journal article" date="2010" name="Nat. Genet.">
        <title>A de novo paradigm for mental retardation.</title>
        <authorList>
            <person name="Vissers L.E."/>
            <person name="de Ligt J."/>
            <person name="Gilissen C."/>
            <person name="Janssen I."/>
            <person name="Steehouwer M."/>
            <person name="de Vries P."/>
            <person name="van Lier B."/>
            <person name="Arts P."/>
            <person name="Wieskamp N."/>
            <person name="del Rosario M."/>
            <person name="van Bon B.W."/>
            <person name="Hoischen A."/>
            <person name="de Vries B.B."/>
            <person name="Brunner H.G."/>
            <person name="Veltman J.A."/>
        </authorList>
    </citation>
    <scope>INVOLVEMENT IN MRD5</scope>
</reference>
<reference key="7">
    <citation type="journal article" date="2011" name="Biol. Psychiatry">
        <title>De novo SYNGAP1 mutations in nonsyndromic intellectual disability and autism.</title>
        <authorList>
            <person name="Hamdan F.F."/>
            <person name="Daoud H."/>
            <person name="Piton A."/>
            <person name="Gauthier J."/>
            <person name="Dobrzeniecka S."/>
            <person name="Krebs M.O."/>
            <person name="Joober R."/>
            <person name="Lacaille J.C."/>
            <person name="Nadeau A."/>
            <person name="Milunsky J.M."/>
            <person name="Wang Z."/>
            <person name="Carmant L."/>
            <person name="Mottron L."/>
            <person name="Beauchamp M.H."/>
            <person name="Rouleau G.A."/>
            <person name="Michaud J.L."/>
        </authorList>
    </citation>
    <scope>INVOLVEMENT IN MRD5</scope>
    <scope>VARIANTS ARG-991 AND THR-1115</scope>
</reference>
<reference key="8">
    <citation type="journal article" date="2013" name="Hum. Mutat.">
        <title>Mutations in SYNGAP1 cause intellectual disability, autism, and a specific form of epilepsy by inducing haploinsufficiency.</title>
        <authorList>
            <person name="Berryer M.H."/>
            <person name="Hamdan F.F."/>
            <person name="Klitten L.L."/>
            <person name="Moller R.S."/>
            <person name="Carmant L."/>
            <person name="Schwartzentruber J."/>
            <person name="Patry L."/>
            <person name="Dobrzeniecka S."/>
            <person name="Rochefort D."/>
            <person name="Neugnot-Cerioli M."/>
            <person name="Lacaille J.C."/>
            <person name="Niu Z."/>
            <person name="Eng C.M."/>
            <person name="Yang Y."/>
            <person name="Palardy S."/>
            <person name="Belhumeur C."/>
            <person name="Rouleau G.A."/>
            <person name="Tommerup N."/>
            <person name="Immken L."/>
            <person name="Beauchamp M.H."/>
            <person name="Patel G.S."/>
            <person name="Majewski J."/>
            <person name="Tarnopolsky M.A."/>
            <person name="Scheffzek K."/>
            <person name="Hjalgrim H."/>
            <person name="Michaud J.L."/>
            <person name="Di Cristo G."/>
        </authorList>
    </citation>
    <scope>VARIANTS MRD5 ARG-362 AND LEU-562</scope>
    <scope>CHARACTERIZATION OF VARIANTS MRD5 ARG-362 AND LEU-562</scope>
</reference>
<reference key="9">
    <citation type="journal article" date="2013" name="Nat. Genet.">
        <title>Targeted resequencing in epileptic encephalopathies identifies de novo mutations in CHD2 and SYNGAP1.</title>
        <authorList>
            <person name="Carvill G.L."/>
            <person name="Heavin S.B."/>
            <person name="Yendle S.C."/>
            <person name="McMahon J.M."/>
            <person name="O'Roak B.J."/>
            <person name="Cook J."/>
            <person name="Khan A."/>
            <person name="Dorschner M.O."/>
            <person name="Weaver M."/>
            <person name="Calvert S."/>
            <person name="Malone S."/>
            <person name="Wallace G."/>
            <person name="Stanley T."/>
            <person name="Bye A.M."/>
            <person name="Bleasel A."/>
            <person name="Howell K.B."/>
            <person name="Kivity S."/>
            <person name="Mackay M.T."/>
            <person name="Rodriguez-Casero V."/>
            <person name="Webster R."/>
            <person name="Korczyn A."/>
            <person name="Afawi Z."/>
            <person name="Zelnick N."/>
            <person name="Lerman-Sagie T."/>
            <person name="Lev D."/>
            <person name="Moeller R.S."/>
            <person name="Gill D."/>
            <person name="Andrade D.M."/>
            <person name="Freeman J.L."/>
            <person name="Sadleir L.G."/>
            <person name="Shendure J."/>
            <person name="Berkovic S.F."/>
            <person name="Scheffer I.E."/>
            <person name="Mefford H.C."/>
        </authorList>
    </citation>
    <scope>VARIANTS MRD5 143-ARG--HIS-1343 DEL; 267-TRP--HIS-1343 DEL AND 701-PRO--HIS-1343 DEL</scope>
</reference>
<reference key="10">
    <citation type="journal article" date="2017" name="Hum. Mutat.">
        <title>Diagnostic targeted resequencing in 349 patients with drug-resistant pediatric epilepsies identifies causative mutations in 30 different genes.</title>
        <authorList>
            <consortium name="Clinical Study Group"/>
            <person name="Parrini E."/>
            <person name="Marini C."/>
            <person name="Mei D."/>
            <person name="Galuppi A."/>
            <person name="Cellini E."/>
            <person name="Pucatti D."/>
            <person name="Chiti L."/>
            <person name="Rutigliano D."/>
            <person name="Bianchini C."/>
            <person name="Virdo S."/>
            <person name="De Vita D."/>
            <person name="Bigoni S."/>
            <person name="Barba C."/>
            <person name="Mari F."/>
            <person name="Montomoli M."/>
            <person name="Pisano T."/>
            <person name="Rosati A."/>
            <person name="Guerrini R."/>
        </authorList>
    </citation>
    <scope>VARIANTS GLN-170 AND PRO-195</scope>
</reference>
<organism>
    <name type="scientific">Homo sapiens</name>
    <name type="common">Human</name>
    <dbReference type="NCBI Taxonomy" id="9606"/>
    <lineage>
        <taxon>Eukaryota</taxon>
        <taxon>Metazoa</taxon>
        <taxon>Chordata</taxon>
        <taxon>Craniata</taxon>
        <taxon>Vertebrata</taxon>
        <taxon>Euteleostomi</taxon>
        <taxon>Mammalia</taxon>
        <taxon>Eutheria</taxon>
        <taxon>Euarchontoglires</taxon>
        <taxon>Primates</taxon>
        <taxon>Haplorrhini</taxon>
        <taxon>Catarrhini</taxon>
        <taxon>Hominidae</taxon>
        <taxon>Homo</taxon>
    </lineage>
</organism>
<accession>Q96PV0</accession>
<accession>A2AB17</accession>
<accession>A2BEL6</accession>
<accession>A2BEL7</accession>
<accession>A8MQC4</accession>
<accession>Q8TCS2</accession>
<accession>Q9UGE2</accession>
<evidence type="ECO:0000250" key="1"/>
<evidence type="ECO:0000250" key="2">
    <source>
        <dbReference type="UniProtKB" id="F6SEU4"/>
    </source>
</evidence>
<evidence type="ECO:0000250" key="3">
    <source>
        <dbReference type="UniProtKB" id="Q9QUH6"/>
    </source>
</evidence>
<evidence type="ECO:0000255" key="4"/>
<evidence type="ECO:0000255" key="5">
    <source>
        <dbReference type="PROSITE-ProRule" id="PRU00041"/>
    </source>
</evidence>
<evidence type="ECO:0000255" key="6">
    <source>
        <dbReference type="PROSITE-ProRule" id="PRU00145"/>
    </source>
</evidence>
<evidence type="ECO:0000255" key="7">
    <source>
        <dbReference type="PROSITE-ProRule" id="PRU00167"/>
    </source>
</evidence>
<evidence type="ECO:0000256" key="8">
    <source>
        <dbReference type="SAM" id="MobiDB-lite"/>
    </source>
</evidence>
<evidence type="ECO:0000269" key="9">
    <source>
    </source>
</evidence>
<evidence type="ECO:0000269" key="10">
    <source>
    </source>
</evidence>
<evidence type="ECO:0000269" key="11">
    <source>
    </source>
</evidence>
<evidence type="ECO:0000269" key="12">
    <source>
    </source>
</evidence>
<evidence type="ECO:0000269" key="13">
    <source>
    </source>
</evidence>
<evidence type="ECO:0000269" key="14">
    <source>
    </source>
</evidence>
<evidence type="ECO:0000269" key="15">
    <source>
    </source>
</evidence>
<evidence type="ECO:0000303" key="16">
    <source>
    </source>
</evidence>
<evidence type="ECO:0000305" key="17"/>
<feature type="chain" id="PRO_0000056654" description="Ras/Rap GTPase-activating protein SynGAP">
    <location>
        <begin position="1"/>
        <end position="1343"/>
    </location>
</feature>
<feature type="domain" description="PH" evidence="6">
    <location>
        <begin position="150"/>
        <end position="251"/>
    </location>
</feature>
<feature type="domain" description="C2" evidence="5">
    <location>
        <begin position="242"/>
        <end position="363"/>
    </location>
</feature>
<feature type="domain" description="Ras-GAP" evidence="7">
    <location>
        <begin position="459"/>
        <end position="667"/>
    </location>
</feature>
<feature type="region of interest" description="Disordered" evidence="8">
    <location>
        <begin position="92"/>
        <end position="129"/>
    </location>
</feature>
<feature type="region of interest" description="Disordered" evidence="8">
    <location>
        <begin position="373"/>
        <end position="394"/>
    </location>
</feature>
<feature type="region of interest" description="Disordered" evidence="8">
    <location>
        <begin position="725"/>
        <end position="753"/>
    </location>
</feature>
<feature type="region of interest" description="Disordered" evidence="8">
    <location>
        <begin position="781"/>
        <end position="805"/>
    </location>
</feature>
<feature type="region of interest" description="Disordered" evidence="8">
    <location>
        <begin position="933"/>
        <end position="1017"/>
    </location>
</feature>
<feature type="region of interest" description="Disordered" evidence="8">
    <location>
        <begin position="1033"/>
        <end position="1154"/>
    </location>
</feature>
<feature type="region of interest" description="Disordered" evidence="8">
    <location>
        <begin position="1274"/>
        <end position="1343"/>
    </location>
</feature>
<feature type="short sequence motif" description="SH3-binding" evidence="4">
    <location>
        <begin position="785"/>
        <end position="815"/>
    </location>
</feature>
<feature type="compositionally biased region" description="Basic and acidic residues" evidence="8">
    <location>
        <begin position="92"/>
        <end position="102"/>
    </location>
</feature>
<feature type="compositionally biased region" description="Gly residues" evidence="8">
    <location>
        <begin position="943"/>
        <end position="952"/>
    </location>
</feature>
<feature type="compositionally biased region" description="Basic residues" evidence="8">
    <location>
        <begin position="956"/>
        <end position="967"/>
    </location>
</feature>
<feature type="compositionally biased region" description="Gly residues" evidence="8">
    <location>
        <begin position="1048"/>
        <end position="1063"/>
    </location>
</feature>
<feature type="compositionally biased region" description="Polar residues" evidence="8">
    <location>
        <begin position="1072"/>
        <end position="1096"/>
    </location>
</feature>
<feature type="compositionally biased region" description="Gly residues" evidence="8">
    <location>
        <begin position="1114"/>
        <end position="1129"/>
    </location>
</feature>
<feature type="compositionally biased region" description="Polar residues" evidence="8">
    <location>
        <begin position="1133"/>
        <end position="1148"/>
    </location>
</feature>
<feature type="compositionally biased region" description="Basic and acidic residues" evidence="8">
    <location>
        <begin position="1274"/>
        <end position="1296"/>
    </location>
</feature>
<feature type="site" description="Arginine finger; crucial for GTP hydrolysis by stabilizing the transition state" evidence="7">
    <location>
        <position position="485"/>
    </location>
</feature>
<feature type="modified residue" description="Phosphotyrosine" evidence="2">
    <location>
        <position position="34"/>
    </location>
</feature>
<feature type="modified residue" description="Phosphotyrosine" evidence="2">
    <location>
        <position position="39"/>
    </location>
</feature>
<feature type="modified residue" description="Phosphoserine" evidence="3">
    <location>
        <position position="117"/>
    </location>
</feature>
<feature type="modified residue" description="Phosphoserine" evidence="2">
    <location>
        <position position="371"/>
    </location>
</feature>
<feature type="modified residue" description="Phosphoserine" evidence="3">
    <location>
        <position position="379"/>
    </location>
</feature>
<feature type="modified residue" description="Phosphoserine; by PLK2" evidence="3">
    <location>
        <position position="385"/>
    </location>
</feature>
<feature type="modified residue" description="Phosphoserine; by PLK2" evidence="3">
    <location>
        <position position="449"/>
    </location>
</feature>
<feature type="modified residue" description="Phosphoserine; by PLK2" evidence="3">
    <location>
        <position position="466"/>
    </location>
</feature>
<feature type="modified residue" description="Phosphoserine" evidence="3">
    <location>
        <position position="752"/>
    </location>
</feature>
<feature type="modified residue" description="Phosphoserine" evidence="3">
    <location>
        <position position="766"/>
    </location>
</feature>
<feature type="modified residue" description="Phosphoserine" evidence="3">
    <location>
        <position position="780"/>
    </location>
</feature>
<feature type="modified residue" description="Phosphoserine" evidence="2">
    <location>
        <position position="823"/>
    </location>
</feature>
<feature type="modified residue" description="Phosphoserine" evidence="2">
    <location>
        <position position="825"/>
    </location>
</feature>
<feature type="modified residue" description="Phosphothreonine" evidence="2">
    <location>
        <position position="828"/>
    </location>
</feature>
<feature type="modified residue" description="Phosphoserine; by PLK2" evidence="3">
    <location>
        <position position="836"/>
    </location>
</feature>
<feature type="modified residue" description="Phosphoserine; by PLK2" evidence="3">
    <location>
        <position position="840"/>
    </location>
</feature>
<feature type="modified residue" description="Phosphoserine; by PLK2" evidence="3">
    <location>
        <position position="842"/>
    </location>
</feature>
<feature type="modified residue" description="Phosphoserine" evidence="2">
    <location>
        <position position="876"/>
    </location>
</feature>
<feature type="modified residue" description="Phosphoserine" evidence="3">
    <location>
        <position position="892"/>
    </location>
</feature>
<feature type="modified residue" description="Phosphoserine; by PLK2" evidence="3">
    <location>
        <position position="895"/>
    </location>
</feature>
<feature type="modified residue" description="Phosphoserine" evidence="2">
    <location>
        <position position="898"/>
    </location>
</feature>
<feature type="modified residue" description="Phosphoserine" evidence="2">
    <location>
        <position position="985"/>
    </location>
</feature>
<feature type="modified residue" description="Phosphoserine" evidence="3">
    <location>
        <position position="1114"/>
    </location>
</feature>
<feature type="modified residue" description="Phosphoserine" evidence="3">
    <location>
        <position position="1118"/>
    </location>
</feature>
<feature type="modified residue" description="Phosphoserine" evidence="3">
    <location>
        <position position="1121"/>
    </location>
</feature>
<feature type="modified residue" description="Phosphoserine" evidence="2">
    <location>
        <position position="1165"/>
    </location>
</feature>
<feature type="modified residue" description="Phosphoserine" evidence="2">
    <location>
        <position position="1204"/>
    </location>
</feature>
<feature type="splice variant" id="VSP_026376" description="In isoform 3." evidence="17">
    <original>MSRSRASIHRGSIPAMSYAPFRDVRGPSMHRTQYVHSPYDRPGWNPRFCIISGNQLLMLDEDEIHPLLIRDRRSESSRNKLLRRTVSVPVEGRPHGEH</original>
    <variation>MGLRPPTPSPSGGSCSGSLPPPSRCQPLRRRCSSCCFPG</variation>
    <location>
        <begin position="1"/>
        <end position="98"/>
    </location>
</feature>
<feature type="splice variant" id="VSP_007973" description="In isoform 2." evidence="16">
    <original>RLMLVEEELRRDHPAMAEPLPEPKKRLLDAQERQLPPLGPTNPRVTLAPPWNGLAPPAPPPPPRLQITENGEFRNTADH</original>
    <variation>SPSLQADAGGGGAAPGPPRHG</variation>
    <location>
        <begin position="1265"/>
        <end position="1343"/>
    </location>
</feature>
<feature type="splice variant" id="VSP_026377" description="In isoform 4." evidence="17">
    <original>ERQLPPLGPTNPRVTLAPPWNGLAPPAPPPPPRLQITENGEFRNTADH</original>
    <variation>LLIR</variation>
    <location>
        <begin position="1296"/>
        <end position="1343"/>
    </location>
</feature>
<feature type="sequence variant" id="VAR_078616" description="In MRD5; uncertain significance." evidence="14">
    <location>
        <begin position="143"/>
        <end position="1343"/>
    </location>
</feature>
<feature type="sequence variant" id="VAR_078233" description="Found in a patient with drug-resistant generalized epilepsy, cognitive impairment and autism spectrum disorder; likely pathogenic; dbSNP:rs1057519546." evidence="15">
    <original>R</original>
    <variation>Q</variation>
    <location>
        <position position="170"/>
    </location>
</feature>
<feature type="sequence variant" id="VAR_078234" description="Found in a patient with West syndrome; likely pathogenic; dbSNP:rs1057519545." evidence="15">
    <original>A</original>
    <variation>P</variation>
    <location>
        <position position="195"/>
    </location>
</feature>
<feature type="sequence variant" id="VAR_065078" description="In dbSNP:rs768682743." evidence="10">
    <original>D</original>
    <variation>E</variation>
    <location>
        <position position="201"/>
    </location>
</feature>
<feature type="sequence variant" id="VAR_078617" description="In MRD5." evidence="14">
    <location>
        <begin position="267"/>
        <end position="1343"/>
    </location>
</feature>
<feature type="sequence variant" id="VAR_069232" description="In MRD5; the mutant protein is less efficient in inhibiting ERK phosphorylation induced by neuronal activity." evidence="13">
    <original>W</original>
    <variation>R</variation>
    <location>
        <position position="362"/>
    </location>
</feature>
<feature type="sequence variant" id="VAR_069233" description="In MRD5; the mutant protein is less efficient in inhibiting ERK phosphorylation induced by neuronal activity; dbSNP:rs397514670." evidence="13">
    <original>P</original>
    <variation>L</variation>
    <location>
        <position position="562"/>
    </location>
</feature>
<feature type="sequence variant" id="VAR_078618" description="In MRD5." evidence="14">
    <location>
        <begin position="701"/>
        <end position="1343"/>
    </location>
</feature>
<feature type="sequence variant" id="VAR_065079" evidence="10">
    <original>R</original>
    <variation>Q</variation>
    <location>
        <position position="749"/>
    </location>
</feature>
<feature type="sequence variant" id="VAR_065080" description="In dbSNP:rs552867155." evidence="10">
    <original>T</original>
    <variation>N</variation>
    <location>
        <position position="790"/>
    </location>
</feature>
<feature type="sequence variant" id="VAR_065081" description="In dbSNP:rs145472959." evidence="12">
    <original>G</original>
    <variation>R</variation>
    <location>
        <position position="991"/>
    </location>
</feature>
<feature type="sequence variant" id="VAR_065082" description="In dbSNP:rs191549504." evidence="10 12">
    <original>I</original>
    <variation>T</variation>
    <location>
        <position position="1115"/>
    </location>
</feature>
<feature type="sequence variant" id="VAR_065083" description="In dbSNP:rs1396355432." evidence="10">
    <original>P</original>
    <variation>L</variation>
    <location>
        <position position="1283"/>
    </location>
</feature>
<feature type="sequence variant" id="VAR_065084" description="In dbSNP:rs796430835." evidence="10">
    <original>T</original>
    <variation>M</variation>
    <location>
        <position position="1310"/>
    </location>
</feature>
<dbReference type="EMBL" id="AB067525">
    <property type="protein sequence ID" value="BAB67831.2"/>
    <property type="status" value="ALT_INIT"/>
    <property type="molecule type" value="mRNA"/>
</dbReference>
<dbReference type="EMBL" id="AL021366">
    <property type="protein sequence ID" value="CAA16161.1"/>
    <property type="molecule type" value="Genomic_DNA"/>
</dbReference>
<dbReference type="EMBL" id="AL662799">
    <property type="status" value="NOT_ANNOTATED_CDS"/>
    <property type="molecule type" value="Genomic_DNA"/>
</dbReference>
<dbReference type="EMBL" id="BX088650">
    <property type="status" value="NOT_ANNOTATED_CDS"/>
    <property type="molecule type" value="Genomic_DNA"/>
</dbReference>
<dbReference type="EMBL" id="AL713634">
    <property type="protein sequence ID" value="CAD28452.1"/>
    <property type="molecule type" value="mRNA"/>
</dbReference>
<dbReference type="CCDS" id="CCDS34434.2">
    <molecule id="Q96PV0-1"/>
</dbReference>
<dbReference type="RefSeq" id="NP_001123538.1">
    <property type="nucleotide sequence ID" value="NM_001130066.1"/>
</dbReference>
<dbReference type="RefSeq" id="NP_006763.2">
    <molecule id="Q96PV0-1"/>
    <property type="nucleotide sequence ID" value="NM_006772.3"/>
</dbReference>
<dbReference type="RefSeq" id="XP_047275414.1">
    <molecule id="Q96PV0-4"/>
    <property type="nucleotide sequence ID" value="XM_047419458.1"/>
</dbReference>
<dbReference type="RefSeq" id="XP_047275417.1">
    <molecule id="Q96PV0-2"/>
    <property type="nucleotide sequence ID" value="XM_047419461.1"/>
</dbReference>
<dbReference type="RefSeq" id="XP_047275419.1">
    <molecule id="Q96PV0-2"/>
    <property type="nucleotide sequence ID" value="XM_047419463.1"/>
</dbReference>
<dbReference type="RefSeq" id="XP_047275420.1">
    <molecule id="Q96PV0-2"/>
    <property type="nucleotide sequence ID" value="XM_047419464.1"/>
</dbReference>
<dbReference type="RefSeq" id="XP_054212635.1">
    <molecule id="Q96PV0-4"/>
    <property type="nucleotide sequence ID" value="XM_054356660.1"/>
</dbReference>
<dbReference type="RefSeq" id="XP_054212637.1">
    <molecule id="Q96PV0-2"/>
    <property type="nucleotide sequence ID" value="XM_054356662.1"/>
</dbReference>
<dbReference type="RefSeq" id="XP_054212639.1">
    <molecule id="Q96PV0-2"/>
    <property type="nucleotide sequence ID" value="XM_054356664.1"/>
</dbReference>
<dbReference type="RefSeq" id="XP_054212640.1">
    <molecule id="Q96PV0-2"/>
    <property type="nucleotide sequence ID" value="XM_054356665.1"/>
</dbReference>
<dbReference type="SMR" id="Q96PV0"/>
<dbReference type="BioGRID" id="114358">
    <property type="interactions" value="54"/>
</dbReference>
<dbReference type="FunCoup" id="Q96PV0">
    <property type="interactions" value="1087"/>
</dbReference>
<dbReference type="IntAct" id="Q96PV0">
    <property type="interactions" value="463"/>
</dbReference>
<dbReference type="MINT" id="Q96PV0"/>
<dbReference type="STRING" id="9606.ENSP00000496007"/>
<dbReference type="GlyCosmos" id="Q96PV0">
    <property type="glycosylation" value="5 sites, 1 glycan"/>
</dbReference>
<dbReference type="GlyGen" id="Q96PV0">
    <property type="glycosylation" value="21 sites, 1 O-linked glycan (20 sites)"/>
</dbReference>
<dbReference type="iPTMnet" id="Q96PV0"/>
<dbReference type="PhosphoSitePlus" id="Q96PV0"/>
<dbReference type="SwissPalm" id="Q96PV0"/>
<dbReference type="BioMuta" id="SYNGAP1"/>
<dbReference type="DMDM" id="150421676"/>
<dbReference type="jPOST" id="Q96PV0"/>
<dbReference type="MassIVE" id="Q96PV0"/>
<dbReference type="PaxDb" id="9606-ENSP00000403636"/>
<dbReference type="PeptideAtlas" id="Q96PV0"/>
<dbReference type="ProteomicsDB" id="77769">
    <molecule id="Q96PV0-1"/>
</dbReference>
<dbReference type="ProteomicsDB" id="77770">
    <molecule id="Q96PV0-2"/>
</dbReference>
<dbReference type="ProteomicsDB" id="77771">
    <molecule id="Q96PV0-3"/>
</dbReference>
<dbReference type="ProteomicsDB" id="77772">
    <molecule id="Q96PV0-4"/>
</dbReference>
<dbReference type="Antibodypedia" id="29204">
    <property type="antibodies" value="247 antibodies from 34 providers"/>
</dbReference>
<dbReference type="DNASU" id="8831"/>
<dbReference type="Ensembl" id="ENST00000395071.6">
    <molecule id="Q96PV0-4"/>
    <property type="protein sequence ID" value="ENSP00000378509.2"/>
    <property type="gene ID" value="ENSG00000227460.8"/>
</dbReference>
<dbReference type="Ensembl" id="ENST00000414753.6">
    <molecule id="Q96PV0-3"/>
    <property type="protein sequence ID" value="ENSP00000407995.2"/>
    <property type="gene ID" value="ENSG00000227460.8"/>
</dbReference>
<dbReference type="Ensembl" id="ENST00000418600.7">
    <molecule id="Q96PV0-2"/>
    <property type="protein sequence ID" value="ENSP00000403636.3"/>
    <property type="gene ID" value="ENSG00000197283.18"/>
</dbReference>
<dbReference type="Ensembl" id="ENST00000428982.4">
    <molecule id="Q96PV0-3"/>
    <property type="protein sequence ID" value="ENSP00000412475.2"/>
    <property type="gene ID" value="ENSG00000197283.18"/>
</dbReference>
<dbReference type="Ensembl" id="ENST00000455687.6">
    <molecule id="Q96PV0-1"/>
    <property type="protein sequence ID" value="ENSP00000414259.2"/>
    <property type="gene ID" value="ENSG00000227460.8"/>
</dbReference>
<dbReference type="Ensembl" id="ENST00000628646.2">
    <molecule id="Q96PV0-4"/>
    <property type="protein sequence ID" value="ENSP00000486431.1"/>
    <property type="gene ID" value="ENSG00000197283.18"/>
</dbReference>
<dbReference type="Ensembl" id="ENST00000629380.3">
    <molecule id="Q96PV0-1"/>
    <property type="protein sequence ID" value="ENSP00000486463.1"/>
    <property type="gene ID" value="ENSG00000197283.18"/>
</dbReference>
<dbReference type="Ensembl" id="ENST00000646630.1">
    <molecule id="Q96PV0-1"/>
    <property type="protein sequence ID" value="ENSP00000496007.1"/>
    <property type="gene ID" value="ENSG00000197283.18"/>
</dbReference>
<dbReference type="GeneID" id="8831"/>
<dbReference type="KEGG" id="hsa:8831"/>
<dbReference type="MANE-Select" id="ENST00000646630.1">
    <property type="protein sequence ID" value="ENSP00000496007.1"/>
    <property type="RefSeq nucleotide sequence ID" value="NM_006772.3"/>
    <property type="RefSeq protein sequence ID" value="NP_006763.2"/>
</dbReference>
<dbReference type="UCSC" id="uc010juz.4">
    <molecule id="Q96PV0-1"/>
    <property type="organism name" value="human"/>
</dbReference>
<dbReference type="AGR" id="HGNC:11497"/>
<dbReference type="CTD" id="8831"/>
<dbReference type="DisGeNET" id="8831"/>
<dbReference type="GeneCards" id="SYNGAP1"/>
<dbReference type="GeneReviews" id="SYNGAP1"/>
<dbReference type="HGNC" id="HGNC:11497">
    <property type="gene designation" value="SYNGAP1"/>
</dbReference>
<dbReference type="HPA" id="ENSG00000197283">
    <property type="expression patterns" value="Low tissue specificity"/>
</dbReference>
<dbReference type="MalaCards" id="SYNGAP1"/>
<dbReference type="MIM" id="603384">
    <property type="type" value="gene"/>
</dbReference>
<dbReference type="MIM" id="612621">
    <property type="type" value="phenotype"/>
</dbReference>
<dbReference type="neXtProt" id="NX_Q96PV0"/>
<dbReference type="OpenTargets" id="ENSG00000197283"/>
<dbReference type="Orphanet" id="1942">
    <property type="disease" value="Epilepsy with myoclonic-atonic seizures"/>
</dbReference>
<dbReference type="Orphanet" id="442835">
    <property type="disease" value="Non-specific early-onset epileptic encephalopathy"/>
</dbReference>
<dbReference type="Orphanet" id="544254">
    <property type="disease" value="SYNGAP1-related developmental and epileptic encephalopathy"/>
</dbReference>
<dbReference type="PharmGKB" id="PA36279"/>
<dbReference type="VEuPathDB" id="HostDB:ENSG00000197283"/>
<dbReference type="eggNOG" id="KOG3508">
    <property type="taxonomic scope" value="Eukaryota"/>
</dbReference>
<dbReference type="GeneTree" id="ENSGT00940000158438"/>
<dbReference type="HOGENOM" id="CLU_001727_1_1_1"/>
<dbReference type="InParanoid" id="Q96PV0"/>
<dbReference type="OMA" id="DPCVNTE"/>
<dbReference type="OrthoDB" id="5572587at2759"/>
<dbReference type="PAN-GO" id="Q96PV0">
    <property type="GO annotations" value="0 GO annotations based on evolutionary models"/>
</dbReference>
<dbReference type="PhylomeDB" id="Q96PV0"/>
<dbReference type="TreeFam" id="TF105303"/>
<dbReference type="PathwayCommons" id="Q96PV0"/>
<dbReference type="Reactome" id="R-HSA-5658442">
    <property type="pathway name" value="Regulation of RAS by GAPs"/>
</dbReference>
<dbReference type="SignaLink" id="Q96PV0"/>
<dbReference type="SIGNOR" id="Q96PV0"/>
<dbReference type="BioGRID-ORCS" id="8831">
    <property type="hits" value="17 hits in 1149 CRISPR screens"/>
</dbReference>
<dbReference type="CD-CODE" id="FB4E32DD">
    <property type="entry name" value="Presynaptic clusters and postsynaptic densities"/>
</dbReference>
<dbReference type="GeneWiki" id="SYNGAP1"/>
<dbReference type="GenomeRNAi" id="8831"/>
<dbReference type="Pharos" id="Q96PV0">
    <property type="development level" value="Tbio"/>
</dbReference>
<dbReference type="PRO" id="PR:Q96PV0"/>
<dbReference type="Proteomes" id="UP000005640">
    <property type="component" value="Chromosome 6"/>
</dbReference>
<dbReference type="RNAct" id="Q96PV0">
    <property type="molecule type" value="protein"/>
</dbReference>
<dbReference type="Bgee" id="ENSG00000197283">
    <property type="expression patterns" value="Expressed in pituitary gland and 99 other cell types or tissues"/>
</dbReference>
<dbReference type="ExpressionAtlas" id="Q96PV0">
    <property type="expression patterns" value="baseline and differential"/>
</dbReference>
<dbReference type="GO" id="GO:0005829">
    <property type="term" value="C:cytosol"/>
    <property type="evidence" value="ECO:0000304"/>
    <property type="project" value="Reactome"/>
</dbReference>
<dbReference type="GO" id="GO:0043198">
    <property type="term" value="C:dendritic shaft"/>
    <property type="evidence" value="ECO:0007669"/>
    <property type="project" value="Ensembl"/>
</dbReference>
<dbReference type="GO" id="GO:0098978">
    <property type="term" value="C:glutamatergic synapse"/>
    <property type="evidence" value="ECO:0007669"/>
    <property type="project" value="Ensembl"/>
</dbReference>
<dbReference type="GO" id="GO:0005886">
    <property type="term" value="C:plasma membrane"/>
    <property type="evidence" value="ECO:0007669"/>
    <property type="project" value="GOC"/>
</dbReference>
<dbReference type="GO" id="GO:0014069">
    <property type="term" value="C:postsynaptic density"/>
    <property type="evidence" value="ECO:0007669"/>
    <property type="project" value="Ensembl"/>
</dbReference>
<dbReference type="GO" id="GO:0005096">
    <property type="term" value="F:GTPase activator activity"/>
    <property type="evidence" value="ECO:0007669"/>
    <property type="project" value="UniProtKB-KW"/>
</dbReference>
<dbReference type="GO" id="GO:0017124">
    <property type="term" value="F:SH3 domain binding"/>
    <property type="evidence" value="ECO:0007669"/>
    <property type="project" value="UniProtKB-KW"/>
</dbReference>
<dbReference type="GO" id="GO:0007409">
    <property type="term" value="P:axonogenesis"/>
    <property type="evidence" value="ECO:0007669"/>
    <property type="project" value="Ensembl"/>
</dbReference>
<dbReference type="GO" id="GO:0016358">
    <property type="term" value="P:dendrite development"/>
    <property type="evidence" value="ECO:0007669"/>
    <property type="project" value="Ensembl"/>
</dbReference>
<dbReference type="GO" id="GO:0098880">
    <property type="term" value="P:maintenance of postsynaptic specialization structure"/>
    <property type="evidence" value="ECO:0007669"/>
    <property type="project" value="Ensembl"/>
</dbReference>
<dbReference type="GO" id="GO:0050771">
    <property type="term" value="P:negative regulation of axonogenesis"/>
    <property type="evidence" value="ECO:0007669"/>
    <property type="project" value="Ensembl"/>
</dbReference>
<dbReference type="GO" id="GO:0043524">
    <property type="term" value="P:negative regulation of neuron apoptotic process"/>
    <property type="evidence" value="ECO:0007669"/>
    <property type="project" value="Ensembl"/>
</dbReference>
<dbReference type="GO" id="GO:0046580">
    <property type="term" value="P:negative regulation of Ras protein signal transduction"/>
    <property type="evidence" value="ECO:0000250"/>
    <property type="project" value="UniProtKB"/>
</dbReference>
<dbReference type="GO" id="GO:0051402">
    <property type="term" value="P:neuron apoptotic process"/>
    <property type="evidence" value="ECO:0007669"/>
    <property type="project" value="Ensembl"/>
</dbReference>
<dbReference type="GO" id="GO:0007389">
    <property type="term" value="P:pattern specification process"/>
    <property type="evidence" value="ECO:0007669"/>
    <property type="project" value="Ensembl"/>
</dbReference>
<dbReference type="GO" id="GO:0007265">
    <property type="term" value="P:Ras protein signal transduction"/>
    <property type="evidence" value="ECO:0007669"/>
    <property type="project" value="Ensembl"/>
</dbReference>
<dbReference type="GO" id="GO:0043113">
    <property type="term" value="P:receptor clustering"/>
    <property type="evidence" value="ECO:0007669"/>
    <property type="project" value="Ensembl"/>
</dbReference>
<dbReference type="GO" id="GO:0048169">
    <property type="term" value="P:regulation of long-term neuronal synaptic plasticity"/>
    <property type="evidence" value="ECO:0007669"/>
    <property type="project" value="Ensembl"/>
</dbReference>
<dbReference type="GO" id="GO:0043408">
    <property type="term" value="P:regulation of MAPK cascade"/>
    <property type="evidence" value="ECO:0007669"/>
    <property type="project" value="Ensembl"/>
</dbReference>
<dbReference type="GO" id="GO:0050803">
    <property type="term" value="P:regulation of synapse structure or activity"/>
    <property type="evidence" value="ECO:0007669"/>
    <property type="project" value="Ensembl"/>
</dbReference>
<dbReference type="GO" id="GO:0048167">
    <property type="term" value="P:regulation of synaptic plasticity"/>
    <property type="evidence" value="ECO:0000250"/>
    <property type="project" value="UniProtKB"/>
</dbReference>
<dbReference type="GO" id="GO:0008542">
    <property type="term" value="P:visual learning"/>
    <property type="evidence" value="ECO:0007669"/>
    <property type="project" value="Ensembl"/>
</dbReference>
<dbReference type="CDD" id="cd04013">
    <property type="entry name" value="C2_SynGAP_like"/>
    <property type="match status" value="1"/>
</dbReference>
<dbReference type="CDD" id="cd13375">
    <property type="entry name" value="PH_SynGAP"/>
    <property type="match status" value="1"/>
</dbReference>
<dbReference type="CDD" id="cd05136">
    <property type="entry name" value="RasGAP_DAB2IP"/>
    <property type="match status" value="1"/>
</dbReference>
<dbReference type="CDD" id="cd22265">
    <property type="entry name" value="UDM1_RNF168"/>
    <property type="match status" value="1"/>
</dbReference>
<dbReference type="FunFam" id="1.10.506.10:FF:000001">
    <property type="entry name" value="Ras GTPase-activating protein nGAP isoform 2"/>
    <property type="match status" value="1"/>
</dbReference>
<dbReference type="FunFam" id="2.60.40.150:FF:000010">
    <property type="entry name" value="Ras GTPase-activating protein nGAP isoform 2"/>
    <property type="match status" value="1"/>
</dbReference>
<dbReference type="Gene3D" id="2.60.40.150">
    <property type="entry name" value="C2 domain"/>
    <property type="match status" value="1"/>
</dbReference>
<dbReference type="Gene3D" id="1.10.506.10">
    <property type="entry name" value="GTPase Activation - p120gap, domain 1"/>
    <property type="match status" value="2"/>
</dbReference>
<dbReference type="Gene3D" id="2.30.29.30">
    <property type="entry name" value="Pleckstrin-homology domain (PH domain)/Phosphotyrosine-binding domain (PTB)"/>
    <property type="match status" value="1"/>
</dbReference>
<dbReference type="InterPro" id="IPR000008">
    <property type="entry name" value="C2_dom"/>
</dbReference>
<dbReference type="InterPro" id="IPR035892">
    <property type="entry name" value="C2_domain_sf"/>
</dbReference>
<dbReference type="InterPro" id="IPR021887">
    <property type="entry name" value="DAB2P_C"/>
</dbReference>
<dbReference type="InterPro" id="IPR011993">
    <property type="entry name" value="PH-like_dom_sf"/>
</dbReference>
<dbReference type="InterPro" id="IPR001849">
    <property type="entry name" value="PH_domain"/>
</dbReference>
<dbReference type="InterPro" id="IPR039360">
    <property type="entry name" value="Ras_GTPase"/>
</dbReference>
<dbReference type="InterPro" id="IPR023152">
    <property type="entry name" value="RasGAP_CS"/>
</dbReference>
<dbReference type="InterPro" id="IPR001936">
    <property type="entry name" value="RasGAP_dom"/>
</dbReference>
<dbReference type="InterPro" id="IPR008936">
    <property type="entry name" value="Rho_GTPase_activation_prot"/>
</dbReference>
<dbReference type="InterPro" id="IPR037779">
    <property type="entry name" value="SynGAP_PH"/>
</dbReference>
<dbReference type="PANTHER" id="PTHR10194">
    <property type="entry name" value="RAS GTPASE-ACTIVATING PROTEINS"/>
    <property type="match status" value="1"/>
</dbReference>
<dbReference type="PANTHER" id="PTHR10194:SF25">
    <property type="entry name" value="RAS_RAP GTPASE-ACTIVATING PROTEIN SYNGAP"/>
    <property type="match status" value="1"/>
</dbReference>
<dbReference type="Pfam" id="PF00168">
    <property type="entry name" value="C2"/>
    <property type="match status" value="1"/>
</dbReference>
<dbReference type="Pfam" id="PF12004">
    <property type="entry name" value="DAB2P_C"/>
    <property type="match status" value="1"/>
</dbReference>
<dbReference type="Pfam" id="PF25321">
    <property type="entry name" value="PH_RASGAP"/>
    <property type="match status" value="1"/>
</dbReference>
<dbReference type="Pfam" id="PF00616">
    <property type="entry name" value="RasGAP"/>
    <property type="match status" value="2"/>
</dbReference>
<dbReference type="SMART" id="SM00239">
    <property type="entry name" value="C2"/>
    <property type="match status" value="1"/>
</dbReference>
<dbReference type="SMART" id="SM00233">
    <property type="entry name" value="PH"/>
    <property type="match status" value="1"/>
</dbReference>
<dbReference type="SMART" id="SM00323">
    <property type="entry name" value="RasGAP"/>
    <property type="match status" value="1"/>
</dbReference>
<dbReference type="SUPFAM" id="SSF49562">
    <property type="entry name" value="C2 domain (Calcium/lipid-binding domain, CaLB)"/>
    <property type="match status" value="1"/>
</dbReference>
<dbReference type="SUPFAM" id="SSF48350">
    <property type="entry name" value="GTPase activation domain, GAP"/>
    <property type="match status" value="1"/>
</dbReference>
<dbReference type="SUPFAM" id="SSF50729">
    <property type="entry name" value="PH domain-like"/>
    <property type="match status" value="1"/>
</dbReference>
<dbReference type="PROSITE" id="PS50004">
    <property type="entry name" value="C2"/>
    <property type="match status" value="1"/>
</dbReference>
<dbReference type="PROSITE" id="PS50003">
    <property type="entry name" value="PH_DOMAIN"/>
    <property type="match status" value="1"/>
</dbReference>
<dbReference type="PROSITE" id="PS00509">
    <property type="entry name" value="RAS_GTPASE_ACTIV_1"/>
    <property type="match status" value="1"/>
</dbReference>
<dbReference type="PROSITE" id="PS50018">
    <property type="entry name" value="RAS_GTPASE_ACTIV_2"/>
    <property type="match status" value="1"/>
</dbReference>
<keyword id="KW-0025">Alternative splicing</keyword>
<keyword id="KW-1269">Autism</keyword>
<keyword id="KW-1268">Autism spectrum disorder</keyword>
<keyword id="KW-0225">Disease variant</keyword>
<keyword id="KW-0343">GTPase activation</keyword>
<keyword id="KW-0991">Intellectual disability</keyword>
<keyword id="KW-0597">Phosphoprotein</keyword>
<keyword id="KW-1267">Proteomics identification</keyword>
<keyword id="KW-1185">Reference proteome</keyword>
<keyword id="KW-0729">SH3-binding</keyword>